<gene>
    <name type="ordered locus">Mhun_2739</name>
</gene>
<organism>
    <name type="scientific">Methanospirillum hungatei JF-1 (strain ATCC 27890 / DSM 864 / NBRC 100397 / JF-1)</name>
    <dbReference type="NCBI Taxonomy" id="323259"/>
    <lineage>
        <taxon>Archaea</taxon>
        <taxon>Methanobacteriati</taxon>
        <taxon>Methanobacteriota</taxon>
        <taxon>Stenosarchaea group</taxon>
        <taxon>Methanomicrobia</taxon>
        <taxon>Methanomicrobiales</taxon>
        <taxon>Methanospirillaceae</taxon>
        <taxon>Methanospirillum</taxon>
    </lineage>
</organism>
<keyword id="KW-0378">Hydrolase</keyword>
<keyword id="KW-0479">Metal-binding</keyword>
<keyword id="KW-0482">Metalloprotease</keyword>
<keyword id="KW-0645">Protease</keyword>
<keyword id="KW-1185">Reference proteome</keyword>
<keyword id="KW-0862">Zinc</keyword>
<protein>
    <recommendedName>
        <fullName>UPF0758 protein Mhun_2739</fullName>
    </recommendedName>
</protein>
<evidence type="ECO:0000255" key="1">
    <source>
        <dbReference type="PROSITE-ProRule" id="PRU01182"/>
    </source>
</evidence>
<evidence type="ECO:0000305" key="2"/>
<feature type="chain" id="PRO_1000089824" description="UPF0758 protein Mhun_2739">
    <location>
        <begin position="1"/>
        <end position="225"/>
    </location>
</feature>
<feature type="domain" description="MPN" evidence="1">
    <location>
        <begin position="102"/>
        <end position="225"/>
    </location>
</feature>
<feature type="short sequence motif" description="JAMM motif" evidence="1">
    <location>
        <begin position="174"/>
        <end position="187"/>
    </location>
</feature>
<feature type="binding site" evidence="1">
    <location>
        <position position="174"/>
    </location>
    <ligand>
        <name>Zn(2+)</name>
        <dbReference type="ChEBI" id="CHEBI:29105"/>
        <note>catalytic</note>
    </ligand>
</feature>
<feature type="binding site" evidence="1">
    <location>
        <position position="176"/>
    </location>
    <ligand>
        <name>Zn(2+)</name>
        <dbReference type="ChEBI" id="CHEBI:29105"/>
        <note>catalytic</note>
    </ligand>
</feature>
<feature type="binding site" evidence="1">
    <location>
        <position position="187"/>
    </location>
    <ligand>
        <name>Zn(2+)</name>
        <dbReference type="ChEBI" id="CHEBI:29105"/>
        <note>catalytic</note>
    </ligand>
</feature>
<comment type="similarity">
    <text evidence="2">Belongs to the UPF0758 family.</text>
</comment>
<proteinExistence type="inferred from homology"/>
<sequence length="225" mass="24527">MPAKRITDIDPLDRPREKIEKKGASALKDSELIAAILGKGTKNNDILTISSQVADLLKKDNLPSYDTLLRINGIGPTKAAVLMACFELANRYGTPAEKERIRITEPDHILKISEVTDLSGKSQEHFLVTTLNGASEVICTRTITMGLLNHSLVHPREVFADAITDRAAAIICIHNHPSGNPEPSSEDITVTRQLSEAGKILGISLLDHLIYTKGKVTSLRSLGYL</sequence>
<reference key="1">
    <citation type="journal article" date="2016" name="Stand. Genomic Sci.">
        <title>Complete genome sequence of Methanospirillum hungatei type strain JF1.</title>
        <authorList>
            <person name="Gunsalus R.P."/>
            <person name="Cook L.E."/>
            <person name="Crable B."/>
            <person name="Rohlin L."/>
            <person name="McDonald E."/>
            <person name="Mouttaki H."/>
            <person name="Sieber J.R."/>
            <person name="Poweleit N."/>
            <person name="Zhou H."/>
            <person name="Lapidus A.L."/>
            <person name="Daligault H.E."/>
            <person name="Land M."/>
            <person name="Gilna P."/>
            <person name="Ivanova N."/>
            <person name="Kyrpides N."/>
            <person name="Culley D.E."/>
            <person name="McInerney M.J."/>
        </authorList>
    </citation>
    <scope>NUCLEOTIDE SEQUENCE [LARGE SCALE GENOMIC DNA]</scope>
    <source>
        <strain>ATCC 27890 / DSM 864 / NBRC 100397 / JF-1</strain>
    </source>
</reference>
<name>Y2739_METHJ</name>
<accession>Q2FT43</accession>
<dbReference type="EMBL" id="CP000254">
    <property type="protein sequence ID" value="ABD42434.1"/>
    <property type="molecule type" value="Genomic_DNA"/>
</dbReference>
<dbReference type="RefSeq" id="WP_011449690.1">
    <property type="nucleotide sequence ID" value="NC_007796.1"/>
</dbReference>
<dbReference type="SMR" id="Q2FT43"/>
<dbReference type="STRING" id="323259.Mhun_2739"/>
<dbReference type="EnsemblBacteria" id="ABD42434">
    <property type="protein sequence ID" value="ABD42434"/>
    <property type="gene ID" value="Mhun_2739"/>
</dbReference>
<dbReference type="GeneID" id="3922212"/>
<dbReference type="KEGG" id="mhu:Mhun_2739"/>
<dbReference type="eggNOG" id="arCOG04919">
    <property type="taxonomic scope" value="Archaea"/>
</dbReference>
<dbReference type="HOGENOM" id="CLU_073529_0_2_2"/>
<dbReference type="InParanoid" id="Q2FT43"/>
<dbReference type="OrthoDB" id="303892at2157"/>
<dbReference type="Proteomes" id="UP000001941">
    <property type="component" value="Chromosome"/>
</dbReference>
<dbReference type="GO" id="GO:0046872">
    <property type="term" value="F:metal ion binding"/>
    <property type="evidence" value="ECO:0007669"/>
    <property type="project" value="UniProtKB-KW"/>
</dbReference>
<dbReference type="GO" id="GO:0008237">
    <property type="term" value="F:metallopeptidase activity"/>
    <property type="evidence" value="ECO:0007669"/>
    <property type="project" value="UniProtKB-KW"/>
</dbReference>
<dbReference type="GO" id="GO:0006508">
    <property type="term" value="P:proteolysis"/>
    <property type="evidence" value="ECO:0007669"/>
    <property type="project" value="UniProtKB-KW"/>
</dbReference>
<dbReference type="CDD" id="cd08071">
    <property type="entry name" value="MPN_DUF2466"/>
    <property type="match status" value="1"/>
</dbReference>
<dbReference type="Gene3D" id="3.40.140.10">
    <property type="entry name" value="Cytidine Deaminase, domain 2"/>
    <property type="match status" value="1"/>
</dbReference>
<dbReference type="InterPro" id="IPR037518">
    <property type="entry name" value="MPN"/>
</dbReference>
<dbReference type="InterPro" id="IPR025657">
    <property type="entry name" value="RadC_JAB"/>
</dbReference>
<dbReference type="InterPro" id="IPR001405">
    <property type="entry name" value="UPF0758"/>
</dbReference>
<dbReference type="InterPro" id="IPR020891">
    <property type="entry name" value="UPF0758_CS"/>
</dbReference>
<dbReference type="InterPro" id="IPR046778">
    <property type="entry name" value="UPF0758_N"/>
</dbReference>
<dbReference type="NCBIfam" id="NF000642">
    <property type="entry name" value="PRK00024.1"/>
    <property type="match status" value="1"/>
</dbReference>
<dbReference type="NCBIfam" id="TIGR00608">
    <property type="entry name" value="radc"/>
    <property type="match status" value="1"/>
</dbReference>
<dbReference type="PANTHER" id="PTHR30471">
    <property type="entry name" value="DNA REPAIR PROTEIN RADC"/>
    <property type="match status" value="1"/>
</dbReference>
<dbReference type="PANTHER" id="PTHR30471:SF3">
    <property type="entry name" value="UPF0758 PROTEIN YEES-RELATED"/>
    <property type="match status" value="1"/>
</dbReference>
<dbReference type="Pfam" id="PF04002">
    <property type="entry name" value="RadC"/>
    <property type="match status" value="1"/>
</dbReference>
<dbReference type="Pfam" id="PF20582">
    <property type="entry name" value="UPF0758_N"/>
    <property type="match status" value="1"/>
</dbReference>
<dbReference type="PROSITE" id="PS50249">
    <property type="entry name" value="MPN"/>
    <property type="match status" value="1"/>
</dbReference>
<dbReference type="PROSITE" id="PS01302">
    <property type="entry name" value="UPF0758"/>
    <property type="match status" value="1"/>
</dbReference>